<keyword id="KW-0002">3D-structure</keyword>
<keyword id="KW-1015">Disulfide bond</keyword>
<keyword id="KW-0325">Glycoprotein</keyword>
<keyword id="KW-0472">Membrane</keyword>
<keyword id="KW-0675">Receptor</keyword>
<keyword id="KW-1185">Reference proteome</keyword>
<keyword id="KW-0732">Signal</keyword>
<keyword id="KW-0812">Transmembrane</keyword>
<keyword id="KW-1133">Transmembrane helix</keyword>
<keyword id="KW-0813">Transport</keyword>
<sequence>MLQHTSLVLLLASIWTTRHPVQGADLVQDLSISTCRIMGVALVGRNKNPQMNFTEANEACKMLGLTLASRDQVESAQKSGFETCSYGWVGEQFSVIPRIFSNPRCGKNGKGVLIWNAPSSQKFKAYCHNSSDTWVNSCIPEIVTTFYPVLDTQTPATEFSVSSSAYLASSPDSTTPVSATTRAPPLTSMARKTKKICITEVYTEPITMATETEAFVASGAAFKNEAAGFGGVPTALLVLALLFFGAAAVLAVCYVKRYVKAFPFTTKNQQKEMIETKVVKEEKADDVNANEESKKTIKNPEEAKSPPKTTVRCLEAEV</sequence>
<evidence type="ECO:0000250" key="1"/>
<evidence type="ECO:0000250" key="2">
    <source>
        <dbReference type="UniProtKB" id="Q9Y5Y7"/>
    </source>
</evidence>
<evidence type="ECO:0000255" key="3"/>
<evidence type="ECO:0000255" key="4">
    <source>
        <dbReference type="PROSITE-ProRule" id="PRU00323"/>
    </source>
</evidence>
<evidence type="ECO:0000256" key="5">
    <source>
        <dbReference type="SAM" id="MobiDB-lite"/>
    </source>
</evidence>
<evidence type="ECO:0000269" key="6">
    <source>
    </source>
</evidence>
<evidence type="ECO:0000269" key="7">
    <source>
    </source>
</evidence>
<evidence type="ECO:0000269" key="8">
    <source>
    </source>
</evidence>
<evidence type="ECO:0000305" key="9"/>
<proteinExistence type="evidence at protein level"/>
<protein>
    <recommendedName>
        <fullName>Lymphatic vessel endothelial hyaluronic acid receptor 1</fullName>
        <shortName>LYVE-1</shortName>
    </recommendedName>
    <alternativeName>
        <fullName>Cell surface retention sequence-binding protein 1</fullName>
        <shortName>CRSBP-1</shortName>
    </alternativeName>
    <alternativeName>
        <fullName>Extracellular link domain-containing protein 1</fullName>
    </alternativeName>
</protein>
<organism>
    <name type="scientific">Mus musculus</name>
    <name type="common">Mouse</name>
    <dbReference type="NCBI Taxonomy" id="10090"/>
    <lineage>
        <taxon>Eukaryota</taxon>
        <taxon>Metazoa</taxon>
        <taxon>Chordata</taxon>
        <taxon>Craniata</taxon>
        <taxon>Vertebrata</taxon>
        <taxon>Euteleostomi</taxon>
        <taxon>Mammalia</taxon>
        <taxon>Eutheria</taxon>
        <taxon>Euarchontoglires</taxon>
        <taxon>Glires</taxon>
        <taxon>Rodentia</taxon>
        <taxon>Myomorpha</taxon>
        <taxon>Muroidea</taxon>
        <taxon>Muridae</taxon>
        <taxon>Murinae</taxon>
        <taxon>Mus</taxon>
        <taxon>Mus</taxon>
    </lineage>
</organism>
<reference key="1">
    <citation type="journal article" date="1999" name="J. Cell Biol.">
        <title>LYVE-1, a new homologue of the CD44 glycoprotein is a lymph-specific receptor for hyaluronan.</title>
        <authorList>
            <person name="Banerji S."/>
            <person name="Ni J."/>
            <person name="Wang S.-X."/>
            <person name="Clasper S."/>
            <person name="Su J."/>
            <person name="Tammi R."/>
            <person name="Jones M."/>
            <person name="Jackson D.G."/>
        </authorList>
    </citation>
    <scope>NUCLEOTIDE SEQUENCE [MRNA]</scope>
    <source>
        <strain>BALB/cJ</strain>
        <tissue>Gastrointestinal tract</tissue>
    </source>
</reference>
<reference key="2">
    <citation type="journal article" date="2005" name="Science">
        <title>The transcriptional landscape of the mammalian genome.</title>
        <authorList>
            <person name="Carninci P."/>
            <person name="Kasukawa T."/>
            <person name="Katayama S."/>
            <person name="Gough J."/>
            <person name="Frith M.C."/>
            <person name="Maeda N."/>
            <person name="Oyama R."/>
            <person name="Ravasi T."/>
            <person name="Lenhard B."/>
            <person name="Wells C."/>
            <person name="Kodzius R."/>
            <person name="Shimokawa K."/>
            <person name="Bajic V.B."/>
            <person name="Brenner S.E."/>
            <person name="Batalov S."/>
            <person name="Forrest A.R."/>
            <person name="Zavolan M."/>
            <person name="Davis M.J."/>
            <person name="Wilming L.G."/>
            <person name="Aidinis V."/>
            <person name="Allen J.E."/>
            <person name="Ambesi-Impiombato A."/>
            <person name="Apweiler R."/>
            <person name="Aturaliya R.N."/>
            <person name="Bailey T.L."/>
            <person name="Bansal M."/>
            <person name="Baxter L."/>
            <person name="Beisel K.W."/>
            <person name="Bersano T."/>
            <person name="Bono H."/>
            <person name="Chalk A.M."/>
            <person name="Chiu K.P."/>
            <person name="Choudhary V."/>
            <person name="Christoffels A."/>
            <person name="Clutterbuck D.R."/>
            <person name="Crowe M.L."/>
            <person name="Dalla E."/>
            <person name="Dalrymple B.P."/>
            <person name="de Bono B."/>
            <person name="Della Gatta G."/>
            <person name="di Bernardo D."/>
            <person name="Down T."/>
            <person name="Engstrom P."/>
            <person name="Fagiolini M."/>
            <person name="Faulkner G."/>
            <person name="Fletcher C.F."/>
            <person name="Fukushima T."/>
            <person name="Furuno M."/>
            <person name="Futaki S."/>
            <person name="Gariboldi M."/>
            <person name="Georgii-Hemming P."/>
            <person name="Gingeras T.R."/>
            <person name="Gojobori T."/>
            <person name="Green R.E."/>
            <person name="Gustincich S."/>
            <person name="Harbers M."/>
            <person name="Hayashi Y."/>
            <person name="Hensch T.K."/>
            <person name="Hirokawa N."/>
            <person name="Hill D."/>
            <person name="Huminiecki L."/>
            <person name="Iacono M."/>
            <person name="Ikeo K."/>
            <person name="Iwama A."/>
            <person name="Ishikawa T."/>
            <person name="Jakt M."/>
            <person name="Kanapin A."/>
            <person name="Katoh M."/>
            <person name="Kawasawa Y."/>
            <person name="Kelso J."/>
            <person name="Kitamura H."/>
            <person name="Kitano H."/>
            <person name="Kollias G."/>
            <person name="Krishnan S.P."/>
            <person name="Kruger A."/>
            <person name="Kummerfeld S.K."/>
            <person name="Kurochkin I.V."/>
            <person name="Lareau L.F."/>
            <person name="Lazarevic D."/>
            <person name="Lipovich L."/>
            <person name="Liu J."/>
            <person name="Liuni S."/>
            <person name="McWilliam S."/>
            <person name="Madan Babu M."/>
            <person name="Madera M."/>
            <person name="Marchionni L."/>
            <person name="Matsuda H."/>
            <person name="Matsuzawa S."/>
            <person name="Miki H."/>
            <person name="Mignone F."/>
            <person name="Miyake S."/>
            <person name="Morris K."/>
            <person name="Mottagui-Tabar S."/>
            <person name="Mulder N."/>
            <person name="Nakano N."/>
            <person name="Nakauchi H."/>
            <person name="Ng P."/>
            <person name="Nilsson R."/>
            <person name="Nishiguchi S."/>
            <person name="Nishikawa S."/>
            <person name="Nori F."/>
            <person name="Ohara O."/>
            <person name="Okazaki Y."/>
            <person name="Orlando V."/>
            <person name="Pang K.C."/>
            <person name="Pavan W.J."/>
            <person name="Pavesi G."/>
            <person name="Pesole G."/>
            <person name="Petrovsky N."/>
            <person name="Piazza S."/>
            <person name="Reed J."/>
            <person name="Reid J.F."/>
            <person name="Ring B.Z."/>
            <person name="Ringwald M."/>
            <person name="Rost B."/>
            <person name="Ruan Y."/>
            <person name="Salzberg S.L."/>
            <person name="Sandelin A."/>
            <person name="Schneider C."/>
            <person name="Schoenbach C."/>
            <person name="Sekiguchi K."/>
            <person name="Semple C.A."/>
            <person name="Seno S."/>
            <person name="Sessa L."/>
            <person name="Sheng Y."/>
            <person name="Shibata Y."/>
            <person name="Shimada H."/>
            <person name="Shimada K."/>
            <person name="Silva D."/>
            <person name="Sinclair B."/>
            <person name="Sperling S."/>
            <person name="Stupka E."/>
            <person name="Sugiura K."/>
            <person name="Sultana R."/>
            <person name="Takenaka Y."/>
            <person name="Taki K."/>
            <person name="Tammoja K."/>
            <person name="Tan S.L."/>
            <person name="Tang S."/>
            <person name="Taylor M.S."/>
            <person name="Tegner J."/>
            <person name="Teichmann S.A."/>
            <person name="Ueda H.R."/>
            <person name="van Nimwegen E."/>
            <person name="Verardo R."/>
            <person name="Wei C.L."/>
            <person name="Yagi K."/>
            <person name="Yamanishi H."/>
            <person name="Zabarovsky E."/>
            <person name="Zhu S."/>
            <person name="Zimmer A."/>
            <person name="Hide W."/>
            <person name="Bult C."/>
            <person name="Grimmond S.M."/>
            <person name="Teasdale R.D."/>
            <person name="Liu E.T."/>
            <person name="Brusic V."/>
            <person name="Quackenbush J."/>
            <person name="Wahlestedt C."/>
            <person name="Mattick J.S."/>
            <person name="Hume D.A."/>
            <person name="Kai C."/>
            <person name="Sasaki D."/>
            <person name="Tomaru Y."/>
            <person name="Fukuda S."/>
            <person name="Kanamori-Katayama M."/>
            <person name="Suzuki M."/>
            <person name="Aoki J."/>
            <person name="Arakawa T."/>
            <person name="Iida J."/>
            <person name="Imamura K."/>
            <person name="Itoh M."/>
            <person name="Kato T."/>
            <person name="Kawaji H."/>
            <person name="Kawagashira N."/>
            <person name="Kawashima T."/>
            <person name="Kojima M."/>
            <person name="Kondo S."/>
            <person name="Konno H."/>
            <person name="Nakano K."/>
            <person name="Ninomiya N."/>
            <person name="Nishio T."/>
            <person name="Okada M."/>
            <person name="Plessy C."/>
            <person name="Shibata K."/>
            <person name="Shiraki T."/>
            <person name="Suzuki S."/>
            <person name="Tagami M."/>
            <person name="Waki K."/>
            <person name="Watahiki A."/>
            <person name="Okamura-Oho Y."/>
            <person name="Suzuki H."/>
            <person name="Kawai J."/>
            <person name="Hayashizaki Y."/>
        </authorList>
    </citation>
    <scope>NUCLEOTIDE SEQUENCE [LARGE SCALE MRNA]</scope>
    <source>
        <strain>C57BL/6J</strain>
        <tissue>Brain</tissue>
        <tissue>Lung</tissue>
    </source>
</reference>
<reference key="3">
    <citation type="journal article" date="2004" name="Genome Res.">
        <title>The status, quality, and expansion of the NIH full-length cDNA project: the Mammalian Gene Collection (MGC).</title>
        <authorList>
            <consortium name="The MGC Project Team"/>
        </authorList>
    </citation>
    <scope>NUCLEOTIDE SEQUENCE [LARGE SCALE MRNA]</scope>
    <source>
        <strain>Czech II</strain>
        <tissue>Lung</tissue>
        <tissue>Mammary gland</tissue>
    </source>
</reference>
<reference key="4">
    <citation type="journal article" date="1999" name="J. Biol. Chem.">
        <title>Cell surface retention sequence binding protein-1 interacts with the v-sis gene product and platelet-derived growth factor beta-type receptor in simian sarcoma virus-transformed cells.</title>
        <authorList>
            <person name="Boensch C."/>
            <person name="Huang S.S."/>
            <person name="Connolly D.T."/>
            <person name="Huang J.S."/>
        </authorList>
    </citation>
    <scope>FUNCTION</scope>
    <scope>INTERACTION WITH PDGFB</scope>
    <scope>SUBCELLULAR LOCATION</scope>
</reference>
<reference key="5">
    <citation type="journal article" date="2007" name="J. Proteome Res.">
        <title>Enhanced analysis of the mouse plasma proteome using cysteine-containing tryptic glycopeptides.</title>
        <authorList>
            <person name="Bernhard O.K."/>
            <person name="Kapp E.A."/>
            <person name="Simpson R.J."/>
        </authorList>
    </citation>
    <scope>GLYCOSYLATION [LARGE SCALE ANALYSIS] AT ASN-52</scope>
    <source>
        <strain>C57BL/6J</strain>
        <tissue>Plasma</tissue>
    </source>
</reference>
<reference key="6">
    <citation type="journal article" date="2010" name="Cell">
        <title>A tissue-specific atlas of mouse protein phosphorylation and expression.</title>
        <authorList>
            <person name="Huttlin E.L."/>
            <person name="Jedrychowski M.P."/>
            <person name="Elias J.E."/>
            <person name="Goswami T."/>
            <person name="Rad R."/>
            <person name="Beausoleil S.A."/>
            <person name="Villen J."/>
            <person name="Haas W."/>
            <person name="Sowa M.E."/>
            <person name="Gygi S.P."/>
        </authorList>
    </citation>
    <scope>IDENTIFICATION BY MASS SPECTROMETRY [LARGE SCALE ANALYSIS]</scope>
    <source>
        <tissue>Lung</tissue>
    </source>
</reference>
<reference key="7">
    <citation type="journal article" date="2017" name="Circ. Res.">
        <title>Polydom Is an Extracellular Matrix Protein Involved in Lymphatic Vessel Remodeling.</title>
        <authorList>
            <person name="Morooka N."/>
            <person name="Futaki S."/>
            <person name="Sato-Nishiuchi R."/>
            <person name="Nishino M."/>
            <person name="Totani Y."/>
            <person name="Shimono C."/>
            <person name="Nakano I."/>
            <person name="Nakajima H."/>
            <person name="Mochizuki N."/>
            <person name="Sekiguchi K."/>
        </authorList>
    </citation>
    <scope>DEVELOPMENTAL STAGE</scope>
</reference>
<name>LYVE1_MOUSE</name>
<accession>Q8BHC0</accession>
<accession>Q3TUC1</accession>
<accession>Q99NE4</accession>
<dbReference type="EMBL" id="AJ311501">
    <property type="protein sequence ID" value="CAC33082.1"/>
    <property type="molecule type" value="mRNA"/>
</dbReference>
<dbReference type="EMBL" id="AK004726">
    <property type="protein sequence ID" value="BAC25094.1"/>
    <property type="molecule type" value="mRNA"/>
</dbReference>
<dbReference type="EMBL" id="AK160857">
    <property type="protein sequence ID" value="BAE36050.1"/>
    <property type="molecule type" value="mRNA"/>
</dbReference>
<dbReference type="EMBL" id="BC038653">
    <property type="protein sequence ID" value="AAH38653.1"/>
    <property type="molecule type" value="mRNA"/>
</dbReference>
<dbReference type="EMBL" id="BC038892">
    <property type="protein sequence ID" value="AAH38892.1"/>
    <property type="molecule type" value="mRNA"/>
</dbReference>
<dbReference type="CCDS" id="CCDS21748.1"/>
<dbReference type="RefSeq" id="NP_444477.2">
    <property type="nucleotide sequence ID" value="NM_053247.4"/>
</dbReference>
<dbReference type="PDB" id="8ORX">
    <property type="method" value="X-ray"/>
    <property type="resolution" value="1.54 A"/>
    <property type="chains" value="A=1-318"/>
</dbReference>
<dbReference type="PDB" id="8OX3">
    <property type="method" value="X-ray"/>
    <property type="resolution" value="1.05 A"/>
    <property type="chains" value="A=1-318"/>
</dbReference>
<dbReference type="PDBsum" id="8ORX"/>
<dbReference type="PDBsum" id="8OX3"/>
<dbReference type="SMR" id="Q8BHC0"/>
<dbReference type="CORUM" id="Q8BHC0"/>
<dbReference type="FunCoup" id="Q8BHC0">
    <property type="interactions" value="615"/>
</dbReference>
<dbReference type="STRING" id="10090.ENSMUSP00000033050"/>
<dbReference type="GlyCosmos" id="Q8BHC0">
    <property type="glycosylation" value="2 sites, No reported glycans"/>
</dbReference>
<dbReference type="GlyGen" id="Q8BHC0">
    <property type="glycosylation" value="2 sites"/>
</dbReference>
<dbReference type="iPTMnet" id="Q8BHC0"/>
<dbReference type="PhosphoSitePlus" id="Q8BHC0"/>
<dbReference type="PaxDb" id="10090-ENSMUSP00000033050"/>
<dbReference type="PeptideAtlas" id="Q8BHC0"/>
<dbReference type="ProteomicsDB" id="290205"/>
<dbReference type="Antibodypedia" id="24364">
    <property type="antibodies" value="855 antibodies from 38 providers"/>
</dbReference>
<dbReference type="DNASU" id="114332"/>
<dbReference type="Ensembl" id="ENSMUST00000033050.5">
    <property type="protein sequence ID" value="ENSMUSP00000033050.4"/>
    <property type="gene ID" value="ENSMUSG00000030787.5"/>
</dbReference>
<dbReference type="GeneID" id="114332"/>
<dbReference type="KEGG" id="mmu:114332"/>
<dbReference type="UCSC" id="uc009jfr.1">
    <property type="organism name" value="mouse"/>
</dbReference>
<dbReference type="AGR" id="MGI:2136348"/>
<dbReference type="CTD" id="10894"/>
<dbReference type="MGI" id="MGI:2136348">
    <property type="gene designation" value="Lyve1"/>
</dbReference>
<dbReference type="VEuPathDB" id="HostDB:ENSMUSG00000030787"/>
<dbReference type="eggNOG" id="ENOG502RY70">
    <property type="taxonomic scope" value="Eukaryota"/>
</dbReference>
<dbReference type="GeneTree" id="ENSGT00530000063822"/>
<dbReference type="HOGENOM" id="CLU_074364_1_0_1"/>
<dbReference type="InParanoid" id="Q8BHC0"/>
<dbReference type="OMA" id="ILPNPKC"/>
<dbReference type="OrthoDB" id="8952307at2759"/>
<dbReference type="PhylomeDB" id="Q8BHC0"/>
<dbReference type="TreeFam" id="TF334173"/>
<dbReference type="Reactome" id="R-MMU-2160916">
    <property type="pathway name" value="Hyaluronan uptake and degradation"/>
</dbReference>
<dbReference type="BioGRID-ORCS" id="114332">
    <property type="hits" value="3 hits in 77 CRISPR screens"/>
</dbReference>
<dbReference type="ChiTaRS" id="Lyve1">
    <property type="organism name" value="mouse"/>
</dbReference>
<dbReference type="PRO" id="PR:Q8BHC0"/>
<dbReference type="Proteomes" id="UP000000589">
    <property type="component" value="Chromosome 7"/>
</dbReference>
<dbReference type="RNAct" id="Q8BHC0">
    <property type="molecule type" value="protein"/>
</dbReference>
<dbReference type="Bgee" id="ENSMUSG00000030787">
    <property type="expression patterns" value="Expressed in endothelial cell of lymphatic vessel and 158 other cell types or tissues"/>
</dbReference>
<dbReference type="GO" id="GO:0071944">
    <property type="term" value="C:cell periphery"/>
    <property type="evidence" value="ECO:0000314"/>
    <property type="project" value="MGI"/>
</dbReference>
<dbReference type="GO" id="GO:0005886">
    <property type="term" value="C:plasma membrane"/>
    <property type="evidence" value="ECO:0000314"/>
    <property type="project" value="MGI"/>
</dbReference>
<dbReference type="GO" id="GO:0038024">
    <property type="term" value="F:cargo receptor activity"/>
    <property type="evidence" value="ECO:0000314"/>
    <property type="project" value="MGI"/>
</dbReference>
<dbReference type="GO" id="GO:0005540">
    <property type="term" value="F:hyaluronic acid binding"/>
    <property type="evidence" value="ECO:0000314"/>
    <property type="project" value="MGI"/>
</dbReference>
<dbReference type="GO" id="GO:0004888">
    <property type="term" value="F:transmembrane signaling receptor activity"/>
    <property type="evidence" value="ECO:0000314"/>
    <property type="project" value="MGI"/>
</dbReference>
<dbReference type="GO" id="GO:0007155">
    <property type="term" value="P:cell adhesion"/>
    <property type="evidence" value="ECO:0007669"/>
    <property type="project" value="InterPro"/>
</dbReference>
<dbReference type="GO" id="GO:0006027">
    <property type="term" value="P:glycosaminoglycan catabolic process"/>
    <property type="evidence" value="ECO:0000314"/>
    <property type="project" value="MGI"/>
</dbReference>
<dbReference type="GO" id="GO:0030214">
    <property type="term" value="P:hyaluronan catabolic process"/>
    <property type="evidence" value="ECO:0000314"/>
    <property type="project" value="MGI"/>
</dbReference>
<dbReference type="GO" id="GO:0002693">
    <property type="term" value="P:positive regulation of cellular extravasation"/>
    <property type="evidence" value="ECO:0007669"/>
    <property type="project" value="Ensembl"/>
</dbReference>
<dbReference type="GO" id="GO:0006898">
    <property type="term" value="P:receptor-mediated endocytosis"/>
    <property type="evidence" value="ECO:0000314"/>
    <property type="project" value="MGI"/>
</dbReference>
<dbReference type="CDD" id="cd03516">
    <property type="entry name" value="Link_domain_CD44_like"/>
    <property type="match status" value="1"/>
</dbReference>
<dbReference type="FunFam" id="3.10.100.10:FF:000057">
    <property type="entry name" value="Lymphatic vessel endothelial hyaluronic acid receptor 1"/>
    <property type="match status" value="1"/>
</dbReference>
<dbReference type="Gene3D" id="3.10.100.10">
    <property type="entry name" value="Mannose-Binding Protein A, subunit A"/>
    <property type="match status" value="1"/>
</dbReference>
<dbReference type="InterPro" id="IPR016186">
    <property type="entry name" value="C-type_lectin-like/link_sf"/>
</dbReference>
<dbReference type="InterPro" id="IPR043210">
    <property type="entry name" value="CD44_antigen-like"/>
</dbReference>
<dbReference type="InterPro" id="IPR016187">
    <property type="entry name" value="CTDL_fold"/>
</dbReference>
<dbReference type="InterPro" id="IPR000538">
    <property type="entry name" value="Link_dom"/>
</dbReference>
<dbReference type="PANTHER" id="PTHR10225">
    <property type="entry name" value="HYALURONAN RECEPTOR"/>
    <property type="match status" value="1"/>
</dbReference>
<dbReference type="PANTHER" id="PTHR10225:SF2">
    <property type="entry name" value="LYMPHATIC VESSEL ENDOTHELIAL HYALURONIC ACID RECEPTOR 1"/>
    <property type="match status" value="1"/>
</dbReference>
<dbReference type="Pfam" id="PF00193">
    <property type="entry name" value="Xlink"/>
    <property type="match status" value="1"/>
</dbReference>
<dbReference type="SMART" id="SM00445">
    <property type="entry name" value="LINK"/>
    <property type="match status" value="1"/>
</dbReference>
<dbReference type="SUPFAM" id="SSF56436">
    <property type="entry name" value="C-type lectin-like"/>
    <property type="match status" value="1"/>
</dbReference>
<dbReference type="PROSITE" id="PS01241">
    <property type="entry name" value="LINK_1"/>
    <property type="match status" value="1"/>
</dbReference>
<dbReference type="PROSITE" id="PS50963">
    <property type="entry name" value="LINK_2"/>
    <property type="match status" value="1"/>
</dbReference>
<comment type="function">
    <text evidence="2 6">Ligand-specific transporter trafficking between intracellular organelles (TGN) and the plasma membrane. Plays a role in autocrine regulation of cell growth mediated by growth regulators containing cell surface retention sequence binding (CRS). May act as a hyaluronan (HA) transporter, either mediating its uptake for catabolism within lymphatic endothelial cells themselves, or its transport into the lumen of afferent lymphatic vessels for subsequent re-uptake and degradation in lymph nodes (PubMed:10187853). Binds to pericelluar hyaluronan matrices deposited on the surface of leukocytes and facilitates cell adhesion and migration through lymphatic endothelium (By similarity).</text>
</comment>
<comment type="subunit">
    <text evidence="6">Homodimer; disulfide-linked. Interacts with PDGFB and IGFBP3. Forms a transient ternary complex with PDGFB and PDGFRB in TGN.</text>
</comment>
<comment type="subcellular location">
    <subcellularLocation>
        <location evidence="6">Membrane</location>
        <topology evidence="6">Single-pass type I membrane protein</topology>
    </subcellularLocation>
    <text>Localized to the plasma membrane and in vesicles near extranuclear membranes which may represent trans-Golgi network (TGN) and endosomes/prelysosomeal compartments. Undergoes ligand-dependent internalization and recycling at the cell surface.</text>
</comment>
<comment type="developmental stage">
    <text evidence="8">Abundantly expressed in mesenteric lymphatic vessels at 16.5 dpc, with expression decreasing at 18.5 dpc (at protein level) (PubMed:28179430). Expressed in dermal lymphatic endothelial cells at 16.5 and 18.5 dpc (at protein level) (PubMed:28179430).</text>
</comment>
<comment type="PTM">
    <text evidence="1">O-glycosylated.</text>
</comment>
<feature type="signal peptide" evidence="3">
    <location>
        <begin position="1"/>
        <end position="23"/>
    </location>
</feature>
<feature type="chain" id="PRO_0000252134" description="Lymphatic vessel endothelial hyaluronic acid receptor 1">
    <location>
        <begin position="24"/>
        <end position="318"/>
    </location>
</feature>
<feature type="topological domain" description="Extracellular" evidence="3">
    <location>
        <begin position="24"/>
        <end position="234"/>
    </location>
</feature>
<feature type="transmembrane region" description="Helical" evidence="3">
    <location>
        <begin position="235"/>
        <end position="255"/>
    </location>
</feature>
<feature type="topological domain" description="Cytoplasmic" evidence="3">
    <location>
        <begin position="256"/>
        <end position="318"/>
    </location>
</feature>
<feature type="domain" description="Link" evidence="4">
    <location>
        <begin position="39"/>
        <end position="129"/>
    </location>
</feature>
<feature type="region of interest" description="Disordered" evidence="5">
    <location>
        <begin position="284"/>
        <end position="318"/>
    </location>
</feature>
<feature type="compositionally biased region" description="Basic and acidic residues" evidence="5">
    <location>
        <begin position="284"/>
        <end position="305"/>
    </location>
</feature>
<feature type="glycosylation site" description="N-linked (GlcNAc...) asparagine" evidence="7">
    <location>
        <position position="52"/>
    </location>
</feature>
<feature type="glycosylation site" description="N-linked (GlcNAc...) asparagine" evidence="3">
    <location>
        <position position="129"/>
    </location>
</feature>
<feature type="disulfide bond" evidence="4">
    <location>
        <begin position="60"/>
        <end position="127"/>
    </location>
</feature>
<feature type="disulfide bond" evidence="4">
    <location>
        <begin position="84"/>
        <end position="105"/>
    </location>
</feature>
<feature type="sequence conflict" description="In Ref. 1; CAC33082." evidence="9" ref="1">
    <original>LL</original>
    <variation>FF</variation>
    <location>
        <begin position="9"/>
        <end position="10"/>
    </location>
</feature>
<feature type="sequence conflict" description="In Ref. 2; BAE36050." evidence="9" ref="2">
    <original>C</original>
    <variation>G</variation>
    <location>
        <position position="60"/>
    </location>
</feature>
<feature type="sequence conflict" description="In Ref. 2; BAE36050." evidence="9" ref="2">
    <original>K</original>
    <variation>E</variation>
    <location>
        <position position="124"/>
    </location>
</feature>
<gene>
    <name type="primary">Lyve1</name>
    <name type="synonym">Crsbp1</name>
    <name type="synonym">Xlkd1</name>
</gene>